<feature type="transit peptide" description="Mitochondrion">
    <location>
        <begin position="1"/>
        <end position="33"/>
    </location>
</feature>
<feature type="chain" id="PRO_0000002454" description="ATP synthase subunit beta, mitochondrial">
    <location>
        <begin position="34"/>
        <end position="511"/>
    </location>
</feature>
<feature type="binding site" evidence="1">
    <location>
        <begin position="190"/>
        <end position="197"/>
    </location>
    <ligand>
        <name>ATP</name>
        <dbReference type="ChEBI" id="CHEBI:30616"/>
    </ligand>
</feature>
<feature type="modified residue" description="Phosphothreonine" evidence="4">
    <location>
        <position position="112"/>
    </location>
</feature>
<feature type="modified residue" description="Phosphothreonine" evidence="4">
    <location>
        <position position="237"/>
    </location>
</feature>
<feature type="modified residue" description="Phosphoserine" evidence="4">
    <location>
        <position position="373"/>
    </location>
</feature>
<feature type="sequence conflict" description="In Ref. 8; AAA34443." evidence="3" ref="8">
    <original>Q</original>
    <variation>M</variation>
    <location>
        <position position="201"/>
    </location>
</feature>
<feature type="sequence conflict" description="In Ref. 1; AAA34444 and 8; AAA34443." evidence="3" ref="1 8">
    <original>T</original>
    <variation>A</variation>
    <location>
        <position position="218"/>
    </location>
</feature>
<feature type="sequence conflict" description="In Ref. 8; AAA34443." evidence="3" ref="8">
    <original>REMKET</original>
    <variation>HEMEDS</variation>
    <location>
        <begin position="232"/>
        <end position="237"/>
    </location>
</feature>
<feature type="sequence conflict" description="In Ref. 8; AAA34443." evidence="3" ref="8">
    <original>G</original>
    <variation>E</variation>
    <location>
        <position position="260"/>
    </location>
</feature>
<feature type="sequence conflict" description="In Ref. 8; AAA34443." evidence="3" ref="8">
    <original>FI</original>
    <variation>Y</variation>
    <location>
        <begin position="287"/>
        <end position="288"/>
    </location>
</feature>
<feature type="sequence conflict" description="In Ref. 1; AAA34444." evidence="3" ref="1">
    <original>APATT</original>
    <variation>SPSTS</variation>
    <location>
        <begin position="354"/>
        <end position="358"/>
    </location>
</feature>
<feature type="sequence conflict" description="In Ref. 1; AAA34444 and 8; AAA34443." evidence="3" ref="1 8">
    <original>TT</original>
    <variation>SS</variation>
    <location>
        <begin position="365"/>
        <end position="366"/>
    </location>
</feature>
<feature type="sequence conflict" description="In Ref. 8; AAA34443." evidence="3" ref="8">
    <original>DTVAS</original>
    <variation>RTRCL</variation>
    <location>
        <begin position="469"/>
        <end position="473"/>
    </location>
</feature>
<feature type="sequence conflict" description="In Ref. 8; AAA34443." evidence="3" ref="8">
    <original>A</original>
    <variation>R</variation>
    <location>
        <position position="489"/>
    </location>
</feature>
<feature type="sequence conflict" description="In Ref. 1; AAA34444." evidence="3" ref="1">
    <original>A</original>
    <variation>R</variation>
    <location>
        <position position="501"/>
    </location>
</feature>
<feature type="sequence conflict" description="In Ref. 1; AAA34444." evidence="3" ref="1">
    <original>A</original>
    <variation>R</variation>
    <location>
        <position position="508"/>
    </location>
</feature>
<feature type="strand" evidence="11">
    <location>
        <begin position="43"/>
        <end position="50"/>
    </location>
</feature>
<feature type="strand" evidence="11">
    <location>
        <begin position="53"/>
        <end position="58"/>
    </location>
</feature>
<feature type="strand" evidence="7">
    <location>
        <begin position="59"/>
        <end position="61"/>
    </location>
</feature>
<feature type="strand" evidence="11">
    <location>
        <begin position="69"/>
        <end position="72"/>
    </location>
</feature>
<feature type="strand" evidence="11">
    <location>
        <begin position="75"/>
        <end position="77"/>
    </location>
</feature>
<feature type="strand" evidence="11">
    <location>
        <begin position="79"/>
        <end position="88"/>
    </location>
</feature>
<feature type="strand" evidence="11">
    <location>
        <begin position="91"/>
        <end position="98"/>
    </location>
</feature>
<feature type="strand" evidence="11">
    <location>
        <begin position="108"/>
        <end position="111"/>
    </location>
</feature>
<feature type="strand" evidence="11">
    <location>
        <begin position="113"/>
        <end position="115"/>
    </location>
</feature>
<feature type="strand" evidence="11">
    <location>
        <begin position="117"/>
        <end position="119"/>
    </location>
</feature>
<feature type="helix" evidence="11">
    <location>
        <begin position="122"/>
        <end position="124"/>
    </location>
</feature>
<feature type="strand" evidence="5">
    <location>
        <begin position="128"/>
        <end position="130"/>
    </location>
</feature>
<feature type="strand" evidence="6">
    <location>
        <begin position="131"/>
        <end position="133"/>
    </location>
</feature>
<feature type="strand" evidence="11">
    <location>
        <begin position="137"/>
        <end position="139"/>
    </location>
</feature>
<feature type="strand" evidence="11">
    <location>
        <begin position="147"/>
        <end position="150"/>
    </location>
</feature>
<feature type="helix" evidence="8">
    <location>
        <begin position="157"/>
        <end position="159"/>
    </location>
</feature>
<feature type="helix" evidence="11">
    <location>
        <begin position="172"/>
        <end position="177"/>
    </location>
</feature>
<feature type="strand" evidence="9">
    <location>
        <begin position="180"/>
        <end position="183"/>
    </location>
</feature>
<feature type="strand" evidence="11">
    <location>
        <begin position="184"/>
        <end position="190"/>
    </location>
</feature>
<feature type="strand" evidence="6">
    <location>
        <begin position="192"/>
        <end position="195"/>
    </location>
</feature>
<feature type="helix" evidence="11">
    <location>
        <begin position="196"/>
        <end position="207"/>
    </location>
</feature>
<feature type="turn" evidence="11">
    <location>
        <begin position="208"/>
        <end position="210"/>
    </location>
</feature>
<feature type="strand" evidence="8">
    <location>
        <begin position="211"/>
        <end position="213"/>
    </location>
</feature>
<feature type="strand" evidence="11">
    <location>
        <begin position="215"/>
        <end position="222"/>
    </location>
</feature>
<feature type="helix" evidence="11">
    <location>
        <begin position="224"/>
        <end position="235"/>
    </location>
</feature>
<feature type="turn" evidence="11">
    <location>
        <begin position="236"/>
        <end position="238"/>
    </location>
</feature>
<feature type="strand" evidence="10">
    <location>
        <begin position="242"/>
        <end position="244"/>
    </location>
</feature>
<feature type="strand" evidence="11">
    <location>
        <begin position="247"/>
        <end position="253"/>
    </location>
</feature>
<feature type="helix" evidence="11">
    <location>
        <begin position="259"/>
        <end position="278"/>
    </location>
</feature>
<feature type="strand" evidence="11">
    <location>
        <begin position="283"/>
        <end position="289"/>
    </location>
</feature>
<feature type="helix" evidence="11">
    <location>
        <begin position="292"/>
        <end position="302"/>
    </location>
</feature>
<feature type="helix" evidence="11">
    <location>
        <begin position="303"/>
        <end position="305"/>
    </location>
</feature>
<feature type="helix" evidence="11">
    <location>
        <begin position="311"/>
        <end position="313"/>
    </location>
</feature>
<feature type="helix" evidence="11">
    <location>
        <begin position="318"/>
        <end position="326"/>
    </location>
</feature>
<feature type="strand" evidence="8">
    <location>
        <begin position="332"/>
        <end position="334"/>
    </location>
</feature>
<feature type="strand" evidence="11">
    <location>
        <begin position="335"/>
        <end position="344"/>
    </location>
</feature>
<feature type="helix" evidence="11">
    <location>
        <begin position="346"/>
        <end position="348"/>
    </location>
</feature>
<feature type="helix" evidence="11">
    <location>
        <begin position="353"/>
        <end position="358"/>
    </location>
</feature>
<feature type="helix" evidence="11">
    <location>
        <begin position="359"/>
        <end position="361"/>
    </location>
</feature>
<feature type="strand" evidence="11">
    <location>
        <begin position="363"/>
        <end position="368"/>
    </location>
</feature>
<feature type="helix" evidence="11">
    <location>
        <begin position="370"/>
        <end position="374"/>
    </location>
</feature>
<feature type="turn" evidence="11">
    <location>
        <begin position="383"/>
        <end position="385"/>
    </location>
</feature>
<feature type="helix" evidence="11">
    <location>
        <begin position="393"/>
        <end position="396"/>
    </location>
</feature>
<feature type="helix" evidence="11">
    <location>
        <begin position="398"/>
        <end position="423"/>
    </location>
</feature>
<feature type="helix" evidence="5">
    <location>
        <begin position="426"/>
        <end position="428"/>
    </location>
</feature>
<feature type="helix" evidence="11">
    <location>
        <begin position="431"/>
        <end position="446"/>
    </location>
</feature>
<feature type="helix" evidence="11">
    <location>
        <begin position="455"/>
        <end position="458"/>
    </location>
</feature>
<feature type="helix" evidence="11">
    <location>
        <begin position="467"/>
        <end position="479"/>
    </location>
</feature>
<feature type="turn" evidence="11">
    <location>
        <begin position="480"/>
        <end position="484"/>
    </location>
</feature>
<feature type="helix" evidence="11">
    <location>
        <begin position="487"/>
        <end position="489"/>
    </location>
</feature>
<feature type="turn" evidence="11">
    <location>
        <begin position="490"/>
        <end position="492"/>
    </location>
</feature>
<feature type="helix" evidence="11">
    <location>
        <begin position="496"/>
        <end position="507"/>
    </location>
</feature>
<reference key="1">
    <citation type="journal article" date="1985" name="J. Biol. Chem.">
        <title>Nuclear genes coding the yeast mitochondrial adenosine triphosphatase complex. Primary sequence analysis of ATP2 encoding the F1-ATPase beta-subunit precursor.</title>
        <authorList>
            <person name="Takeda M."/>
            <person name="Vassarotti A."/>
            <person name="Douglas M.G."/>
        </authorList>
    </citation>
    <scope>NUCLEOTIDE SEQUENCE [GENOMIC DNA]</scope>
</reference>
<reference key="2">
    <citation type="journal article" date="1986" name="J. Biol. Chem.">
        <authorList>
            <person name="Takeda M."/>
            <person name="Vassarotti A."/>
            <person name="Douglas M.G."/>
        </authorList>
    </citation>
    <scope>ERRATUM OF PUBMED:2866186</scope>
</reference>
<reference key="3">
    <citation type="submission" date="1986-07" db="EMBL/GenBank/DDBJ databases">
        <authorList>
            <person name="Takeda M."/>
        </authorList>
    </citation>
    <scope>SEQUENCE REVISION</scope>
</reference>
<reference key="4">
    <citation type="journal article" date="1996" name="J. Biol. Chem.">
        <title>Characterization of mutations in the beta subunit of the mitochondrial F1-ATPase that produce defects in enzyme catalysis and assembly.</title>
        <authorList>
            <person name="Liang Y."/>
            <person name="Ackerman S.H."/>
        </authorList>
    </citation>
    <scope>NUCLEOTIDE SEQUENCE [GENOMIC DNA]</scope>
    <source>
        <strain>ATCC 24657 / D273-10B</strain>
    </source>
</reference>
<reference key="5">
    <citation type="journal article" date="1996" name="EMBO J.">
        <title>Complete nucleotide sequence of Saccharomyces cerevisiae chromosome X.</title>
        <authorList>
            <person name="Galibert F."/>
            <person name="Alexandraki D."/>
            <person name="Baur A."/>
            <person name="Boles E."/>
            <person name="Chalwatzis N."/>
            <person name="Chuat J.-C."/>
            <person name="Coster F."/>
            <person name="Cziepluch C."/>
            <person name="de Haan M."/>
            <person name="Domdey H."/>
            <person name="Durand P."/>
            <person name="Entian K.-D."/>
            <person name="Gatius M."/>
            <person name="Goffeau A."/>
            <person name="Grivell L.A."/>
            <person name="Hennemann A."/>
            <person name="Herbert C.J."/>
            <person name="Heumann K."/>
            <person name="Hilger F."/>
            <person name="Hollenberg C.P."/>
            <person name="Huang M.-E."/>
            <person name="Jacq C."/>
            <person name="Jauniaux J.-C."/>
            <person name="Katsoulou C."/>
            <person name="Kirchrath L."/>
            <person name="Kleine K."/>
            <person name="Kordes E."/>
            <person name="Koetter P."/>
            <person name="Liebl S."/>
            <person name="Louis E.J."/>
            <person name="Manus V."/>
            <person name="Mewes H.-W."/>
            <person name="Miosga T."/>
            <person name="Obermaier B."/>
            <person name="Perea J."/>
            <person name="Pohl T.M."/>
            <person name="Portetelle D."/>
            <person name="Pujol A."/>
            <person name="Purnelle B."/>
            <person name="Ramezani Rad M."/>
            <person name="Rasmussen S.W."/>
            <person name="Rose M."/>
            <person name="Rossau R."/>
            <person name="Schaaff-Gerstenschlaeger I."/>
            <person name="Smits P.H.M."/>
            <person name="Scarcez T."/>
            <person name="Soriano N."/>
            <person name="To Van D."/>
            <person name="Tzermia M."/>
            <person name="Van Broekhoven A."/>
            <person name="Vandenbol M."/>
            <person name="Wedler H."/>
            <person name="von Wettstein D."/>
            <person name="Wambutt R."/>
            <person name="Zagulski M."/>
            <person name="Zollner A."/>
            <person name="Karpfinger-Hartl L."/>
        </authorList>
    </citation>
    <scope>NUCLEOTIDE SEQUENCE [LARGE SCALE GENOMIC DNA]</scope>
    <source>
        <strain>ATCC 204508 / S288c</strain>
    </source>
</reference>
<reference key="6">
    <citation type="journal article" date="2014" name="G3 (Bethesda)">
        <title>The reference genome sequence of Saccharomyces cerevisiae: Then and now.</title>
        <authorList>
            <person name="Engel S.R."/>
            <person name="Dietrich F.S."/>
            <person name="Fisk D.G."/>
            <person name="Binkley G."/>
            <person name="Balakrishnan R."/>
            <person name="Costanzo M.C."/>
            <person name="Dwight S.S."/>
            <person name="Hitz B.C."/>
            <person name="Karra K."/>
            <person name="Nash R.S."/>
            <person name="Weng S."/>
            <person name="Wong E.D."/>
            <person name="Lloyd P."/>
            <person name="Skrzypek M.S."/>
            <person name="Miyasato S.R."/>
            <person name="Simison M."/>
            <person name="Cherry J.M."/>
        </authorList>
    </citation>
    <scope>GENOME REANNOTATION</scope>
    <source>
        <strain>ATCC 204508 / S288c</strain>
    </source>
</reference>
<reference key="7">
    <citation type="journal article" date="1990" name="Biochem. J.">
        <title>Transport of the yeast ATP synthase beta-subunit into mitochondria. Effects of amino acid substitutions on targeting.</title>
        <authorList>
            <person name="Walker M.E."/>
            <person name="Valentin E."/>
            <person name="Reid G.A."/>
        </authorList>
    </citation>
    <scope>NUCLEOTIDE SEQUENCE [GENOMIC DNA] OF 1-37</scope>
</reference>
<reference key="8">
    <citation type="journal article" date="1983" name="J. Biol. Chem.">
        <title>Nuclear genes coding the yeast mitochondrial adenosine triphosphatase complex. Isolation of ATP2 coding the F1-ATPase beta subunit.</title>
        <authorList>
            <person name="Saltzgaber-Muller J."/>
            <person name="Kunapuli S.P."/>
            <person name="Douglas M.G."/>
        </authorList>
    </citation>
    <scope>NUCLEOTIDE SEQUENCE [GENOMIC DNA] OF 195-507</scope>
</reference>
<reference key="9">
    <citation type="journal article" date="1996" name="FEMS Microbiol. Lett.">
        <title>Protein expression during exponential growth in 0.7 M NaCl medium of Saccharomyces cerevisiae.</title>
        <authorList>
            <person name="Norbeck J."/>
            <person name="Blomberg A."/>
        </authorList>
    </citation>
    <scope>PROTEIN SEQUENCE OF 371-379 AND 390-398</scope>
    <source>
        <strain>ATCC 38531 / Y41</strain>
    </source>
</reference>
<reference key="10">
    <citation type="journal article" date="2003" name="Nature">
        <title>Global analysis of protein expression in yeast.</title>
        <authorList>
            <person name="Ghaemmaghami S."/>
            <person name="Huh W.-K."/>
            <person name="Bower K."/>
            <person name="Howson R.W."/>
            <person name="Belle A."/>
            <person name="Dephoure N."/>
            <person name="O'Shea E.K."/>
            <person name="Weissman J.S."/>
        </authorList>
    </citation>
    <scope>LEVEL OF PROTEIN EXPRESSION [LARGE SCALE ANALYSIS]</scope>
</reference>
<reference key="11">
    <citation type="journal article" date="2007" name="Mol. Cell. Proteomics">
        <title>Profiling phosphoproteins of yeast mitochondria reveals a role of phosphorylation in assembly of the ATP synthase.</title>
        <authorList>
            <person name="Reinders J."/>
            <person name="Wagner K."/>
            <person name="Zahedi R.P."/>
            <person name="Stojanovski D."/>
            <person name="Eyrich B."/>
            <person name="van der Laan M."/>
            <person name="Rehling P."/>
            <person name="Sickmann A."/>
            <person name="Pfanner N."/>
            <person name="Meisinger C."/>
        </authorList>
    </citation>
    <scope>PHOSPHORYLATION [LARGE SCALE ANALYSIS] AT THR-112; THR-237 AND SER-373</scope>
    <scope>IDENTIFICATION BY MASS SPECTROMETRY [LARGE SCALE ANALYSIS]</scope>
    <source>
        <strain>ATCC 76625 / YPH499</strain>
    </source>
</reference>
<reference key="12">
    <citation type="journal article" date="1999" name="Science">
        <title>Molecular architecture of the rotary motor in ATP synthase.</title>
        <authorList>
            <person name="Stock D."/>
            <person name="Leslie A.G."/>
            <person name="Walker J.E."/>
        </authorList>
    </citation>
    <scope>3D-STRUCTURE MODELING</scope>
</reference>
<sequence>MVLPRLYTATSRAAFKAAKQSAPLLSTSWKRCMASAAQSTPITGKVTAVIGAIVDVHFEQSELPAILNALEIKTPQGKLVLEVAQHLGENTVRTIAMDGTEGLVRGEKVLDTGGPISVPVGRETLGRIINVIGEPIDERGPIKSKLRKPIHADPPSFAEQSTSAEILETGIKVVDLLAPYARGGKIGLFGGAGVGKTVFIQELINNIAKAHGGFSVFTGVGERTREGNDLYREMKETGVINLEGESKVALVFGQMNEPPGARARVALTGLTIAEYFRDEEGQDVLLFIDNIFRFTQAGSEVSALLGRIPSAVGYQPTLATDMGLLQERITTTKKGSVTSVQAVYVPADDLTDPAPATTFAHLDATTVLSRGISELGIYPAVDPLDSKSRLLDAAVVGQEHYDVASKVQETLQTYKSLQDIIAILGMDELSEQDKLTVERARKIQRFLSQPFAVAEVFTGIPGKLVRLKDTVASFKAVLEGKYDNIPEHAFYMVGGIEDVVAKAEKLAAEAN</sequence>
<keyword id="KW-0002">3D-structure</keyword>
<keyword id="KW-0066">ATP synthesis</keyword>
<keyword id="KW-0067">ATP-binding</keyword>
<keyword id="KW-0139">CF(1)</keyword>
<keyword id="KW-0903">Direct protein sequencing</keyword>
<keyword id="KW-0375">Hydrogen ion transport</keyword>
<keyword id="KW-0406">Ion transport</keyword>
<keyword id="KW-0472">Membrane</keyword>
<keyword id="KW-0496">Mitochondrion</keyword>
<keyword id="KW-0999">Mitochondrion inner membrane</keyword>
<keyword id="KW-0547">Nucleotide-binding</keyword>
<keyword id="KW-0597">Phosphoprotein</keyword>
<keyword id="KW-1185">Reference proteome</keyword>
<keyword id="KW-0809">Transit peptide</keyword>
<keyword id="KW-1278">Translocase</keyword>
<keyword id="KW-0813">Transport</keyword>
<comment type="function">
    <text>Mitochondrial membrane ATP synthase (F(1)F(0) ATP synthase or Complex V) produces ATP from ADP in the presence of a proton gradient across the membrane which is generated by electron transport complexes of the respiratory chain. F-type ATPases consist of two structural domains, F(1) - containing the extramembraneous catalytic core, and F(0) - containing the membrane proton channel, linked together by a central stalk and a peripheral stalk. During catalysis, ATP synthesis in the catalytic domain of F(1) is coupled via a rotary mechanism of the central stalk subunits to proton translocation. Subunits alpha and beta form the catalytic core in F(1). Rotation of the central stalk against the surrounding alpha(3)beta(3) subunits leads to hydrolysis of ATP in three separate catalytic sites on the beta subunits.</text>
</comment>
<comment type="catalytic activity">
    <reaction>
        <text>ATP + H2O + 4 H(+)(in) = ADP + phosphate + 5 H(+)(out)</text>
        <dbReference type="Rhea" id="RHEA:57720"/>
        <dbReference type="ChEBI" id="CHEBI:15377"/>
        <dbReference type="ChEBI" id="CHEBI:15378"/>
        <dbReference type="ChEBI" id="CHEBI:30616"/>
        <dbReference type="ChEBI" id="CHEBI:43474"/>
        <dbReference type="ChEBI" id="CHEBI:456216"/>
        <dbReference type="EC" id="7.1.2.2"/>
    </reaction>
</comment>
<comment type="subunit">
    <text>F-type ATPases have 2 components, CF(1) - the catalytic core - and CF(0) - the membrane proton channel. CF(1) has five subunits: alpha(3), beta(3), gamma(1), delta(1), epsilon(1). CF(0) has three main subunits: a, b and c.</text>
</comment>
<comment type="interaction">
    <interactant intactId="EBI-3242">
        <id>P00830</id>
    </interactant>
    <interactant intactId="EBI-7668387">
        <id>Q02888</id>
        <label>INA17</label>
    </interactant>
    <organismsDiffer>false</organismsDiffer>
    <experiments>2</experiments>
</comment>
<comment type="subcellular location">
    <subcellularLocation>
        <location>Mitochondrion</location>
    </subcellularLocation>
    <subcellularLocation>
        <location>Mitochondrion inner membrane</location>
    </subcellularLocation>
    <text>Peripheral membrane protein.</text>
</comment>
<comment type="miscellaneous">
    <text evidence="2">Present with 164000 molecules/cell in log phase SD medium.</text>
</comment>
<comment type="similarity">
    <text evidence="3">Belongs to the ATPase alpha/beta chains family.</text>
</comment>
<name>ATPB_YEAST</name>
<protein>
    <recommendedName>
        <fullName>ATP synthase subunit beta, mitochondrial</fullName>
        <ecNumber>7.1.2.2</ecNumber>
    </recommendedName>
</protein>
<proteinExistence type="evidence at protein level"/>
<evidence type="ECO:0000250" key="1"/>
<evidence type="ECO:0000269" key="2">
    <source>
    </source>
</evidence>
<evidence type="ECO:0000305" key="3"/>
<evidence type="ECO:0007744" key="4">
    <source>
    </source>
</evidence>
<evidence type="ECO:0007829" key="5">
    <source>
        <dbReference type="PDB" id="2HLD"/>
    </source>
</evidence>
<evidence type="ECO:0007829" key="6">
    <source>
        <dbReference type="PDB" id="2WPD"/>
    </source>
</evidence>
<evidence type="ECO:0007829" key="7">
    <source>
        <dbReference type="PDB" id="2XOK"/>
    </source>
</evidence>
<evidence type="ECO:0007829" key="8">
    <source>
        <dbReference type="PDB" id="3OEE"/>
    </source>
</evidence>
<evidence type="ECO:0007829" key="9">
    <source>
        <dbReference type="PDB" id="3OEH"/>
    </source>
</evidence>
<evidence type="ECO:0007829" key="10">
    <source>
        <dbReference type="PDB" id="3OFN"/>
    </source>
</evidence>
<evidence type="ECO:0007829" key="11">
    <source>
        <dbReference type="PDB" id="3ZIA"/>
    </source>
</evidence>
<organism>
    <name type="scientific">Saccharomyces cerevisiae (strain ATCC 204508 / S288c)</name>
    <name type="common">Baker's yeast</name>
    <dbReference type="NCBI Taxonomy" id="559292"/>
    <lineage>
        <taxon>Eukaryota</taxon>
        <taxon>Fungi</taxon>
        <taxon>Dikarya</taxon>
        <taxon>Ascomycota</taxon>
        <taxon>Saccharomycotina</taxon>
        <taxon>Saccharomycetes</taxon>
        <taxon>Saccharomycetales</taxon>
        <taxon>Saccharomycetaceae</taxon>
        <taxon>Saccharomyces</taxon>
    </lineage>
</organism>
<dbReference type="EC" id="7.1.2.2"/>
<dbReference type="EMBL" id="M12082">
    <property type="protein sequence ID" value="AAA34444.1"/>
    <property type="molecule type" value="Genomic_DNA"/>
</dbReference>
<dbReference type="EMBL" id="U46215">
    <property type="protein sequence ID" value="AAC49475.1"/>
    <property type="molecule type" value="Genomic_DNA"/>
</dbReference>
<dbReference type="EMBL" id="Z49621">
    <property type="protein sequence ID" value="CAA89652.1"/>
    <property type="molecule type" value="Genomic_DNA"/>
</dbReference>
<dbReference type="EMBL" id="X52004">
    <property type="protein sequence ID" value="CAA36255.1"/>
    <property type="molecule type" value="Genomic_DNA"/>
</dbReference>
<dbReference type="EMBL" id="K00560">
    <property type="protein sequence ID" value="AAA34443.1"/>
    <property type="molecule type" value="Genomic_DNA"/>
</dbReference>
<dbReference type="EMBL" id="BK006943">
    <property type="protein sequence ID" value="DAA08906.1"/>
    <property type="molecule type" value="Genomic_DNA"/>
</dbReference>
<dbReference type="PIR" id="S57144">
    <property type="entry name" value="PWBYB"/>
</dbReference>
<dbReference type="RefSeq" id="NP_012655.3">
    <property type="nucleotide sequence ID" value="NM_001181779.3"/>
</dbReference>
<dbReference type="PDB" id="2HLD">
    <property type="method" value="X-ray"/>
    <property type="resolution" value="2.80 A"/>
    <property type="chains" value="D/E/F/M/N/O/V/W/X=34-511"/>
</dbReference>
<dbReference type="PDB" id="2WPD">
    <property type="method" value="X-ray"/>
    <property type="resolution" value="3.43 A"/>
    <property type="chains" value="D/E/F=34-511"/>
</dbReference>
<dbReference type="PDB" id="2XOK">
    <property type="method" value="X-ray"/>
    <property type="resolution" value="3.01 A"/>
    <property type="chains" value="D/E/F=1-507"/>
</dbReference>
<dbReference type="PDB" id="3FKS">
    <property type="method" value="X-ray"/>
    <property type="resolution" value="3.59 A"/>
    <property type="chains" value="D/E/F/M/N/O/V/W/X=36-511"/>
</dbReference>
<dbReference type="PDB" id="3OE7">
    <property type="method" value="X-ray"/>
    <property type="resolution" value="3.19 A"/>
    <property type="chains" value="D/E/F/M/N/O/V/W/X=36-511"/>
</dbReference>
<dbReference type="PDB" id="3OEE">
    <property type="method" value="X-ray"/>
    <property type="resolution" value="2.74 A"/>
    <property type="chains" value="D/E/F/M/N/O/V/W/X=36-511"/>
</dbReference>
<dbReference type="PDB" id="3OEH">
    <property type="method" value="X-ray"/>
    <property type="resolution" value="3.00 A"/>
    <property type="chains" value="D/E/F/M/N/O/V/W/X=36-511"/>
</dbReference>
<dbReference type="PDB" id="3OFN">
    <property type="method" value="X-ray"/>
    <property type="resolution" value="3.20 A"/>
    <property type="chains" value="D/E/F/M/N/O/V/W/X=36-511"/>
</dbReference>
<dbReference type="PDB" id="3ZIA">
    <property type="method" value="X-ray"/>
    <property type="resolution" value="2.50 A"/>
    <property type="chains" value="D/E/F/N/O/P=34-511"/>
</dbReference>
<dbReference type="PDB" id="3ZRY">
    <property type="method" value="X-ray"/>
    <property type="resolution" value="6.50 A"/>
    <property type="chains" value="D/E/F=34-511"/>
</dbReference>
<dbReference type="PDB" id="4B2Q">
    <property type="method" value="EM"/>
    <property type="resolution" value="37.00 A"/>
    <property type="chains" value="D/d=39-508, E/F/e/f=39-511"/>
</dbReference>
<dbReference type="PDB" id="6B8H">
    <property type="method" value="EM"/>
    <property type="resolution" value="3.60 A"/>
    <property type="chains" value="D/E/F/Y/Z/c=34-511"/>
</dbReference>
<dbReference type="PDB" id="6CP3">
    <property type="method" value="EM"/>
    <property type="resolution" value="3.80 A"/>
    <property type="chains" value="D/E/F=34-511"/>
</dbReference>
<dbReference type="PDB" id="6CP6">
    <property type="method" value="EM"/>
    <property type="resolution" value="3.60 A"/>
    <property type="chains" value="D/E/F=34-511"/>
</dbReference>
<dbReference type="PDB" id="7TJT">
    <property type="method" value="EM"/>
    <property type="resolution" value="3.20 A"/>
    <property type="chains" value="D/E/F=34-511"/>
</dbReference>
<dbReference type="PDB" id="7TJU">
    <property type="method" value="EM"/>
    <property type="resolution" value="3.30 A"/>
    <property type="chains" value="D/E/F=34-511"/>
</dbReference>
<dbReference type="PDB" id="7TJV">
    <property type="method" value="EM"/>
    <property type="resolution" value="3.60 A"/>
    <property type="chains" value="D/E/F=34-511"/>
</dbReference>
<dbReference type="PDB" id="7TJW">
    <property type="method" value="EM"/>
    <property type="resolution" value="4.00 A"/>
    <property type="chains" value="D/E/F=34-511"/>
</dbReference>
<dbReference type="PDB" id="7TJX">
    <property type="method" value="EM"/>
    <property type="resolution" value="4.00 A"/>
    <property type="chains" value="D/E/F=34-511"/>
</dbReference>
<dbReference type="PDB" id="7TJY">
    <property type="method" value="EM"/>
    <property type="resolution" value="3.80 A"/>
    <property type="chains" value="D/E/F=34-511"/>
</dbReference>
<dbReference type="PDB" id="7TJZ">
    <property type="method" value="EM"/>
    <property type="resolution" value="4.40 A"/>
    <property type="chains" value="D/E/F=34-511"/>
</dbReference>
<dbReference type="PDB" id="7TK0">
    <property type="method" value="EM"/>
    <property type="resolution" value="4.40 A"/>
    <property type="chains" value="D/E/F=34-511"/>
</dbReference>
<dbReference type="PDB" id="7TK1">
    <property type="method" value="EM"/>
    <property type="resolution" value="7.10 A"/>
    <property type="chains" value="D/E/F=34-511"/>
</dbReference>
<dbReference type="PDB" id="7TK2">
    <property type="method" value="EM"/>
    <property type="resolution" value="6.50 A"/>
    <property type="chains" value="D/E/F=34-511"/>
</dbReference>
<dbReference type="PDB" id="7TK3">
    <property type="method" value="EM"/>
    <property type="resolution" value="6.30 A"/>
    <property type="chains" value="D/E/F=34-511"/>
</dbReference>
<dbReference type="PDB" id="7TK4">
    <property type="method" value="EM"/>
    <property type="resolution" value="7.00 A"/>
    <property type="chains" value="D/E/F=34-511"/>
</dbReference>
<dbReference type="PDB" id="7TK5">
    <property type="method" value="EM"/>
    <property type="resolution" value="7.80 A"/>
    <property type="chains" value="D/E/F=34-511"/>
</dbReference>
<dbReference type="PDB" id="7TK6">
    <property type="method" value="EM"/>
    <property type="resolution" value="6.50 A"/>
    <property type="chains" value="D/E/F=34-511"/>
</dbReference>
<dbReference type="PDB" id="7TK7">
    <property type="method" value="EM"/>
    <property type="resolution" value="6.70 A"/>
    <property type="chains" value="D/E/F=34-511"/>
</dbReference>
<dbReference type="PDB" id="7TK8">
    <property type="method" value="EM"/>
    <property type="resolution" value="4.70 A"/>
    <property type="chains" value="D/E/F=34-511"/>
</dbReference>
<dbReference type="PDB" id="7TK9">
    <property type="method" value="EM"/>
    <property type="resolution" value="6.00 A"/>
    <property type="chains" value="D/E/F=34-511"/>
</dbReference>
<dbReference type="PDB" id="7TKA">
    <property type="method" value="EM"/>
    <property type="resolution" value="7.10 A"/>
    <property type="chains" value="D/E/F=34-511"/>
</dbReference>
<dbReference type="PDB" id="7TKB">
    <property type="method" value="EM"/>
    <property type="resolution" value="6.30 A"/>
    <property type="chains" value="D/E/F=34-511"/>
</dbReference>
<dbReference type="PDB" id="7TKC">
    <property type="method" value="EM"/>
    <property type="resolution" value="5.80 A"/>
    <property type="chains" value="D/E/F=34-511"/>
</dbReference>
<dbReference type="PDB" id="7TKD">
    <property type="method" value="EM"/>
    <property type="resolution" value="7.70 A"/>
    <property type="chains" value="D/E/F=34-511"/>
</dbReference>
<dbReference type="PDB" id="7TKE">
    <property type="method" value="EM"/>
    <property type="resolution" value="7.10 A"/>
    <property type="chains" value="D/E/F=34-511"/>
</dbReference>
<dbReference type="PDB" id="7TKF">
    <property type="method" value="EM"/>
    <property type="resolution" value="7.10 A"/>
    <property type="chains" value="D/E/F=34-511"/>
</dbReference>
<dbReference type="PDB" id="7TKG">
    <property type="method" value="EM"/>
    <property type="resolution" value="4.50 A"/>
    <property type="chains" value="D/E/F=34-511"/>
</dbReference>
<dbReference type="PDB" id="7TKH">
    <property type="method" value="EM"/>
    <property type="resolution" value="4.40 A"/>
    <property type="chains" value="D/E/F=34-511"/>
</dbReference>
<dbReference type="PDB" id="7TKI">
    <property type="method" value="EM"/>
    <property type="resolution" value="7.10 A"/>
    <property type="chains" value="D/E/F=34-511"/>
</dbReference>
<dbReference type="PDB" id="7TKJ">
    <property type="method" value="EM"/>
    <property type="resolution" value="7.50 A"/>
    <property type="chains" value="D/E/F=34-511"/>
</dbReference>
<dbReference type="PDB" id="7TKK">
    <property type="method" value="EM"/>
    <property type="resolution" value="7.30 A"/>
    <property type="chains" value="D/E/F=34-511"/>
</dbReference>
<dbReference type="PDB" id="7TKL">
    <property type="method" value="EM"/>
    <property type="resolution" value="6.40 A"/>
    <property type="chains" value="D/E/F=34-511"/>
</dbReference>
<dbReference type="PDB" id="7TKM">
    <property type="method" value="EM"/>
    <property type="resolution" value="4.50 A"/>
    <property type="chains" value="D/E/F=34-511"/>
</dbReference>
<dbReference type="PDB" id="7TKN">
    <property type="method" value="EM"/>
    <property type="resolution" value="7.10 A"/>
    <property type="chains" value="D/E/F=34-511"/>
</dbReference>
<dbReference type="PDB" id="7TKO">
    <property type="method" value="EM"/>
    <property type="resolution" value="4.80 A"/>
    <property type="chains" value="D/E/F=34-511"/>
</dbReference>
<dbReference type="PDB" id="7TKP">
    <property type="method" value="EM"/>
    <property type="resolution" value="4.60 A"/>
    <property type="chains" value="D/E/F=34-511"/>
</dbReference>
<dbReference type="PDB" id="7TKQ">
    <property type="method" value="EM"/>
    <property type="resolution" value="4.50 A"/>
    <property type="chains" value="D/E/F=34-511"/>
</dbReference>
<dbReference type="PDB" id="7TKR">
    <property type="method" value="EM"/>
    <property type="resolution" value="6.50 A"/>
    <property type="chains" value="D/E/F=34-511"/>
</dbReference>
<dbReference type="PDB" id="7TKS">
    <property type="method" value="EM"/>
    <property type="resolution" value="7.50 A"/>
    <property type="chains" value="D/E/F=34-511"/>
</dbReference>
<dbReference type="PDB" id="8F29">
    <property type="method" value="EM"/>
    <property type="resolution" value="4.00 A"/>
    <property type="chains" value="D/E/F=39-511"/>
</dbReference>
<dbReference type="PDB" id="8F2K">
    <property type="method" value="EM"/>
    <property type="resolution" value="2.90 A"/>
    <property type="chains" value="D/E/F=41-509"/>
</dbReference>
<dbReference type="PDB" id="8F39">
    <property type="method" value="EM"/>
    <property type="resolution" value="3.50 A"/>
    <property type="chains" value="D/E/F=39-511"/>
</dbReference>
<dbReference type="PDB" id="8FKJ">
    <property type="method" value="EM"/>
    <property type="resolution" value="4.20 A"/>
    <property type="chains" value="D/E/F=39-511"/>
</dbReference>
<dbReference type="PDB" id="8FL8">
    <property type="method" value="EM"/>
    <property type="resolution" value="4.20 A"/>
    <property type="chains" value="D/E/F=39-511"/>
</dbReference>
<dbReference type="PDBsum" id="2HLD"/>
<dbReference type="PDBsum" id="2WPD"/>
<dbReference type="PDBsum" id="2XOK"/>
<dbReference type="PDBsum" id="3FKS"/>
<dbReference type="PDBsum" id="3OE7"/>
<dbReference type="PDBsum" id="3OEE"/>
<dbReference type="PDBsum" id="3OEH"/>
<dbReference type="PDBsum" id="3OFN"/>
<dbReference type="PDBsum" id="3ZIA"/>
<dbReference type="PDBsum" id="3ZRY"/>
<dbReference type="PDBsum" id="4B2Q"/>
<dbReference type="PDBsum" id="6B8H"/>
<dbReference type="PDBsum" id="6CP3"/>
<dbReference type="PDBsum" id="6CP6"/>
<dbReference type="PDBsum" id="7TJT"/>
<dbReference type="PDBsum" id="7TJU"/>
<dbReference type="PDBsum" id="7TJV"/>
<dbReference type="PDBsum" id="7TJW"/>
<dbReference type="PDBsum" id="7TJX"/>
<dbReference type="PDBsum" id="7TJY"/>
<dbReference type="PDBsum" id="7TJZ"/>
<dbReference type="PDBsum" id="7TK0"/>
<dbReference type="PDBsum" id="7TK1"/>
<dbReference type="PDBsum" id="7TK2"/>
<dbReference type="PDBsum" id="7TK3"/>
<dbReference type="PDBsum" id="7TK4"/>
<dbReference type="PDBsum" id="7TK5"/>
<dbReference type="PDBsum" id="7TK6"/>
<dbReference type="PDBsum" id="7TK7"/>
<dbReference type="PDBsum" id="7TK8"/>
<dbReference type="PDBsum" id="7TK9"/>
<dbReference type="PDBsum" id="7TKA"/>
<dbReference type="PDBsum" id="7TKB"/>
<dbReference type="PDBsum" id="7TKC"/>
<dbReference type="PDBsum" id="7TKD"/>
<dbReference type="PDBsum" id="7TKE"/>
<dbReference type="PDBsum" id="7TKF"/>
<dbReference type="PDBsum" id="7TKG"/>
<dbReference type="PDBsum" id="7TKH"/>
<dbReference type="PDBsum" id="7TKI"/>
<dbReference type="PDBsum" id="7TKJ"/>
<dbReference type="PDBsum" id="7TKK"/>
<dbReference type="PDBsum" id="7TKL"/>
<dbReference type="PDBsum" id="7TKM"/>
<dbReference type="PDBsum" id="7TKN"/>
<dbReference type="PDBsum" id="7TKO"/>
<dbReference type="PDBsum" id="7TKP"/>
<dbReference type="PDBsum" id="7TKQ"/>
<dbReference type="PDBsum" id="7TKR"/>
<dbReference type="PDBsum" id="7TKS"/>
<dbReference type="PDBsum" id="8F29"/>
<dbReference type="PDBsum" id="8F2K"/>
<dbReference type="PDBsum" id="8F39"/>
<dbReference type="PDBsum" id="8FKJ"/>
<dbReference type="PDBsum" id="8FL8"/>
<dbReference type="EMDB" id="EMD-25931"/>
<dbReference type="EMDB" id="EMD-25932"/>
<dbReference type="EMDB" id="EMD-25933"/>
<dbReference type="EMDB" id="EMD-25934"/>
<dbReference type="EMDB" id="EMD-25939"/>
<dbReference type="EMDB" id="EMD-25946"/>
<dbReference type="EMDB" id="EMD-25947"/>
<dbReference type="EMDB" id="EMD-25948"/>
<dbReference type="EMDB" id="EMD-25949"/>
<dbReference type="EMDB" id="EMD-25954"/>
<dbReference type="EMDB" id="EMD-25955"/>
<dbReference type="EMDB" id="EMD-25956"/>
<dbReference type="EMDB" id="EMD-25957"/>
<dbReference type="EMDB" id="EMD-25958"/>
<dbReference type="EMDB" id="EMD-25959"/>
<dbReference type="EMDB" id="EMD-25960"/>
<dbReference type="EMDB" id="EMD-25961"/>
<dbReference type="EMDB" id="EMD-25962"/>
<dbReference type="EMDB" id="EMD-25963"/>
<dbReference type="EMDB" id="EMD-25964"/>
<dbReference type="EMDB" id="EMD-25965"/>
<dbReference type="EMDB" id="EMD-25966"/>
<dbReference type="EMDB" id="EMD-25967"/>
<dbReference type="EMDB" id="EMD-25968"/>
<dbReference type="EMDB" id="EMD-25969"/>
<dbReference type="EMDB" id="EMD-25970"/>
<dbReference type="EMDB" id="EMD-25971"/>
<dbReference type="EMDB" id="EMD-25972"/>
<dbReference type="EMDB" id="EMD-25973"/>
<dbReference type="EMDB" id="EMD-25974"/>
<dbReference type="EMDB" id="EMD-25975"/>
<dbReference type="EMDB" id="EMD-25976"/>
<dbReference type="EMDB" id="EMD-25977"/>
<dbReference type="EMDB" id="EMD-25978"/>
<dbReference type="EMDB" id="EMD-25979"/>
<dbReference type="EMDB" id="EMD-25980"/>
<dbReference type="EMDB" id="EMD-28809"/>
<dbReference type="EMDB" id="EMD-28835"/>
<dbReference type="EMDB" id="EMD-7546"/>
<dbReference type="EMDB" id="EMD-7548"/>
<dbReference type="SMR" id="P00830"/>
<dbReference type="BioGRID" id="33877">
    <property type="interactions" value="284"/>
</dbReference>
<dbReference type="ComplexPortal" id="CPX-3281">
    <property type="entry name" value="Mitochondrial proton-transporting ATP synthase complex"/>
</dbReference>
<dbReference type="DIP" id="DIP-3028N"/>
<dbReference type="FunCoup" id="P00830">
    <property type="interactions" value="1621"/>
</dbReference>
<dbReference type="IntAct" id="P00830">
    <property type="interactions" value="217"/>
</dbReference>
<dbReference type="MINT" id="P00830"/>
<dbReference type="STRING" id="4932.YJR121W"/>
<dbReference type="BindingDB" id="P00830"/>
<dbReference type="ChEMBL" id="CHEMBL1075103"/>
<dbReference type="TCDB" id="3.A.2.1.3">
    <property type="family name" value="the h+- or na+-translocating f-type, v-type and a-type atpase (f-atpase) superfamily"/>
</dbReference>
<dbReference type="iPTMnet" id="P00830"/>
<dbReference type="PaxDb" id="4932-YJR121W"/>
<dbReference type="PeptideAtlas" id="P00830"/>
<dbReference type="EnsemblFungi" id="YJR121W_mRNA">
    <property type="protein sequence ID" value="YJR121W"/>
    <property type="gene ID" value="YJR121W"/>
</dbReference>
<dbReference type="GeneID" id="853585"/>
<dbReference type="KEGG" id="sce:YJR121W"/>
<dbReference type="AGR" id="SGD:S000003882"/>
<dbReference type="SGD" id="S000003882">
    <property type="gene designation" value="ATP2"/>
</dbReference>
<dbReference type="VEuPathDB" id="FungiDB:YJR121W"/>
<dbReference type="eggNOG" id="KOG1350">
    <property type="taxonomic scope" value="Eukaryota"/>
</dbReference>
<dbReference type="GeneTree" id="ENSGT00550000074800"/>
<dbReference type="HOGENOM" id="CLU_022398_0_2_1"/>
<dbReference type="InParanoid" id="P00830"/>
<dbReference type="OMA" id="SMEEGGW"/>
<dbReference type="OrthoDB" id="14523at2759"/>
<dbReference type="BioCyc" id="YEAST:G3O-31742-MONOMER"/>
<dbReference type="BRENDA" id="7.1.2.2">
    <property type="organism ID" value="984"/>
</dbReference>
<dbReference type="Reactome" id="R-SCE-9837999">
    <property type="pathway name" value="Mitochondrial protein degradation"/>
</dbReference>
<dbReference type="BioGRID-ORCS" id="853585">
    <property type="hits" value="8 hits in 10 CRISPR screens"/>
</dbReference>
<dbReference type="ChiTaRS" id="ATP2">
    <property type="organism name" value="yeast"/>
</dbReference>
<dbReference type="EvolutionaryTrace" id="P00830"/>
<dbReference type="PRO" id="PR:P00830"/>
<dbReference type="Proteomes" id="UP000002311">
    <property type="component" value="Chromosome X"/>
</dbReference>
<dbReference type="RNAct" id="P00830">
    <property type="molecule type" value="protein"/>
</dbReference>
<dbReference type="GO" id="GO:0005829">
    <property type="term" value="C:cytosol"/>
    <property type="evidence" value="ECO:0000304"/>
    <property type="project" value="Reactome"/>
</dbReference>
<dbReference type="GO" id="GO:0005743">
    <property type="term" value="C:mitochondrial inner membrane"/>
    <property type="evidence" value="ECO:0000314"/>
    <property type="project" value="ComplexPortal"/>
</dbReference>
<dbReference type="GO" id="GO:0005758">
    <property type="term" value="C:mitochondrial intermembrane space"/>
    <property type="evidence" value="ECO:0000304"/>
    <property type="project" value="Reactome"/>
</dbReference>
<dbReference type="GO" id="GO:0005739">
    <property type="term" value="C:mitochondrion"/>
    <property type="evidence" value="ECO:0007005"/>
    <property type="project" value="SGD"/>
</dbReference>
<dbReference type="GO" id="GO:0045259">
    <property type="term" value="C:proton-transporting ATP synthase complex"/>
    <property type="evidence" value="ECO:0000314"/>
    <property type="project" value="SGD"/>
</dbReference>
<dbReference type="GO" id="GO:0005524">
    <property type="term" value="F:ATP binding"/>
    <property type="evidence" value="ECO:0007669"/>
    <property type="project" value="UniProtKB-KW"/>
</dbReference>
<dbReference type="GO" id="GO:0016887">
    <property type="term" value="F:ATP hydrolysis activity"/>
    <property type="evidence" value="ECO:0007669"/>
    <property type="project" value="InterPro"/>
</dbReference>
<dbReference type="GO" id="GO:0046933">
    <property type="term" value="F:proton-transporting ATP synthase activity, rotational mechanism"/>
    <property type="evidence" value="ECO:0007669"/>
    <property type="project" value="InterPro"/>
</dbReference>
<dbReference type="GO" id="GO:0046961">
    <property type="term" value="F:proton-transporting ATPase activity, rotational mechanism"/>
    <property type="evidence" value="ECO:0000315"/>
    <property type="project" value="SGD"/>
</dbReference>
<dbReference type="GO" id="GO:0015986">
    <property type="term" value="P:proton motive force-driven ATP synthesis"/>
    <property type="evidence" value="ECO:0000314"/>
    <property type="project" value="ComplexPortal"/>
</dbReference>
<dbReference type="GO" id="GO:0042776">
    <property type="term" value="P:proton motive force-driven mitochondrial ATP synthesis"/>
    <property type="evidence" value="ECO:0000318"/>
    <property type="project" value="GO_Central"/>
</dbReference>
<dbReference type="CDD" id="cd18110">
    <property type="entry name" value="ATP-synt_F1_beta_C"/>
    <property type="match status" value="1"/>
</dbReference>
<dbReference type="CDD" id="cd18115">
    <property type="entry name" value="ATP-synt_F1_beta_N"/>
    <property type="match status" value="1"/>
</dbReference>
<dbReference type="CDD" id="cd01133">
    <property type="entry name" value="F1-ATPase_beta_CD"/>
    <property type="match status" value="1"/>
</dbReference>
<dbReference type="FunFam" id="1.10.1140.10:FF:000001">
    <property type="entry name" value="ATP synthase subunit beta"/>
    <property type="match status" value="1"/>
</dbReference>
<dbReference type="FunFam" id="2.40.10.170:FF:000004">
    <property type="entry name" value="ATP synthase subunit beta"/>
    <property type="match status" value="1"/>
</dbReference>
<dbReference type="FunFam" id="3.40.50.300:FF:000026">
    <property type="entry name" value="ATP synthase subunit beta"/>
    <property type="match status" value="1"/>
</dbReference>
<dbReference type="Gene3D" id="2.40.10.170">
    <property type="match status" value="1"/>
</dbReference>
<dbReference type="Gene3D" id="1.10.1140.10">
    <property type="entry name" value="Bovine Mitochondrial F1-atpase, Atp Synthase Beta Chain, Chain D, domain 3"/>
    <property type="match status" value="1"/>
</dbReference>
<dbReference type="Gene3D" id="3.40.50.300">
    <property type="entry name" value="P-loop containing nucleotide triphosphate hydrolases"/>
    <property type="match status" value="1"/>
</dbReference>
<dbReference type="HAMAP" id="MF_01347">
    <property type="entry name" value="ATP_synth_beta_bact"/>
    <property type="match status" value="1"/>
</dbReference>
<dbReference type="InterPro" id="IPR003593">
    <property type="entry name" value="AAA+_ATPase"/>
</dbReference>
<dbReference type="InterPro" id="IPR055190">
    <property type="entry name" value="ATP-synt_VA_C"/>
</dbReference>
<dbReference type="InterPro" id="IPR005722">
    <property type="entry name" value="ATP_synth_F1_bsu"/>
</dbReference>
<dbReference type="InterPro" id="IPR020003">
    <property type="entry name" value="ATPase_a/bsu_AS"/>
</dbReference>
<dbReference type="InterPro" id="IPR050053">
    <property type="entry name" value="ATPase_alpha/beta_chains"/>
</dbReference>
<dbReference type="InterPro" id="IPR004100">
    <property type="entry name" value="ATPase_F1/V1/A1_a/bsu_N"/>
</dbReference>
<dbReference type="InterPro" id="IPR036121">
    <property type="entry name" value="ATPase_F1/V1/A1_a/bsu_N_sf"/>
</dbReference>
<dbReference type="InterPro" id="IPR000194">
    <property type="entry name" value="ATPase_F1/V1/A1_a/bsu_nucl-bd"/>
</dbReference>
<dbReference type="InterPro" id="IPR024034">
    <property type="entry name" value="ATPase_F1/V1_b/a_C"/>
</dbReference>
<dbReference type="InterPro" id="IPR027417">
    <property type="entry name" value="P-loop_NTPase"/>
</dbReference>
<dbReference type="NCBIfam" id="TIGR01039">
    <property type="entry name" value="atpD"/>
    <property type="match status" value="1"/>
</dbReference>
<dbReference type="PANTHER" id="PTHR15184">
    <property type="entry name" value="ATP SYNTHASE"/>
    <property type="match status" value="1"/>
</dbReference>
<dbReference type="PANTHER" id="PTHR15184:SF71">
    <property type="entry name" value="ATP SYNTHASE SUBUNIT BETA, MITOCHONDRIAL"/>
    <property type="match status" value="1"/>
</dbReference>
<dbReference type="Pfam" id="PF00006">
    <property type="entry name" value="ATP-synt_ab"/>
    <property type="match status" value="1"/>
</dbReference>
<dbReference type="Pfam" id="PF02874">
    <property type="entry name" value="ATP-synt_ab_N"/>
    <property type="match status" value="1"/>
</dbReference>
<dbReference type="Pfam" id="PF22919">
    <property type="entry name" value="ATP-synt_VA_C"/>
    <property type="match status" value="1"/>
</dbReference>
<dbReference type="PIRSF" id="PIRSF039072">
    <property type="entry name" value="ATPase_subunit_beta"/>
    <property type="match status" value="1"/>
</dbReference>
<dbReference type="SMART" id="SM00382">
    <property type="entry name" value="AAA"/>
    <property type="match status" value="1"/>
</dbReference>
<dbReference type="SUPFAM" id="SSF47917">
    <property type="entry name" value="C-terminal domain of alpha and beta subunits of F1 ATP synthase"/>
    <property type="match status" value="1"/>
</dbReference>
<dbReference type="SUPFAM" id="SSF50615">
    <property type="entry name" value="N-terminal domain of alpha and beta subunits of F1 ATP synthase"/>
    <property type="match status" value="1"/>
</dbReference>
<dbReference type="SUPFAM" id="SSF52540">
    <property type="entry name" value="P-loop containing nucleoside triphosphate hydrolases"/>
    <property type="match status" value="1"/>
</dbReference>
<dbReference type="PROSITE" id="PS00152">
    <property type="entry name" value="ATPASE_ALPHA_BETA"/>
    <property type="match status" value="1"/>
</dbReference>
<gene>
    <name type="primary">ATP2</name>
    <name type="ordered locus">YJR121W</name>
    <name type="ORF">J2041</name>
</gene>
<accession>P00830</accession>
<accession>D6VWU0</accession>